<accession>C1DLY5</accession>
<sequence length="340" mass="36015">MIARQPIAVLGGGSFGTALANLLAENGHVVRLWMRDPEQAEAIRTRRENPRYLKGVRVLPGIEPVTDLAATVSASELIFVVLPSSALRQVLQPVSALLDGKMLVSTTKGIEAQSFKLMSQIIEEIAPRARIGVLSGPNLAREIAEHALTASVIASEDEALCQAVQAVLHGRTFRVYASGDRFGVELGGALKNVYAIMAGMAASLGMGENTKSMLITRALAEMTRFAARLGANPMTFLGLAGVGDLIVTCTSPKSRNYQVGHALGQGLALEEAVARLGEVAEGVNTLRVLKAKAEELGVYMPLVAGLHAILFEGRTLAQVIEALMTGEPKTDVDFISTSGF</sequence>
<feature type="chain" id="PRO_1000205853" description="Glycerol-3-phosphate dehydrogenase [NAD(P)+]">
    <location>
        <begin position="1"/>
        <end position="340"/>
    </location>
</feature>
<feature type="active site" description="Proton acceptor" evidence="1">
    <location>
        <position position="191"/>
    </location>
</feature>
<feature type="binding site" evidence="1">
    <location>
        <position position="14"/>
    </location>
    <ligand>
        <name>NADPH</name>
        <dbReference type="ChEBI" id="CHEBI:57783"/>
    </ligand>
</feature>
<feature type="binding site" evidence="1">
    <location>
        <position position="15"/>
    </location>
    <ligand>
        <name>NADPH</name>
        <dbReference type="ChEBI" id="CHEBI:57783"/>
    </ligand>
</feature>
<feature type="binding site" evidence="1">
    <location>
        <position position="35"/>
    </location>
    <ligand>
        <name>NADPH</name>
        <dbReference type="ChEBI" id="CHEBI:57783"/>
    </ligand>
</feature>
<feature type="binding site" evidence="1">
    <location>
        <position position="108"/>
    </location>
    <ligand>
        <name>NADPH</name>
        <dbReference type="ChEBI" id="CHEBI:57783"/>
    </ligand>
</feature>
<feature type="binding site" evidence="1">
    <location>
        <position position="108"/>
    </location>
    <ligand>
        <name>sn-glycerol 3-phosphate</name>
        <dbReference type="ChEBI" id="CHEBI:57597"/>
    </ligand>
</feature>
<feature type="binding site" evidence="1">
    <location>
        <position position="136"/>
    </location>
    <ligand>
        <name>sn-glycerol 3-phosphate</name>
        <dbReference type="ChEBI" id="CHEBI:57597"/>
    </ligand>
</feature>
<feature type="binding site" evidence="1">
    <location>
        <position position="140"/>
    </location>
    <ligand>
        <name>NADPH</name>
        <dbReference type="ChEBI" id="CHEBI:57783"/>
    </ligand>
</feature>
<feature type="binding site" evidence="1">
    <location>
        <position position="191"/>
    </location>
    <ligand>
        <name>sn-glycerol 3-phosphate</name>
        <dbReference type="ChEBI" id="CHEBI:57597"/>
    </ligand>
</feature>
<feature type="binding site" evidence="1">
    <location>
        <position position="244"/>
    </location>
    <ligand>
        <name>sn-glycerol 3-phosphate</name>
        <dbReference type="ChEBI" id="CHEBI:57597"/>
    </ligand>
</feature>
<feature type="binding site" evidence="1">
    <location>
        <position position="254"/>
    </location>
    <ligand>
        <name>sn-glycerol 3-phosphate</name>
        <dbReference type="ChEBI" id="CHEBI:57597"/>
    </ligand>
</feature>
<feature type="binding site" evidence="1">
    <location>
        <position position="255"/>
    </location>
    <ligand>
        <name>NADPH</name>
        <dbReference type="ChEBI" id="CHEBI:57783"/>
    </ligand>
</feature>
<feature type="binding site" evidence="1">
    <location>
        <position position="255"/>
    </location>
    <ligand>
        <name>sn-glycerol 3-phosphate</name>
        <dbReference type="ChEBI" id="CHEBI:57597"/>
    </ligand>
</feature>
<feature type="binding site" evidence="1">
    <location>
        <position position="256"/>
    </location>
    <ligand>
        <name>sn-glycerol 3-phosphate</name>
        <dbReference type="ChEBI" id="CHEBI:57597"/>
    </ligand>
</feature>
<feature type="binding site" evidence="1">
    <location>
        <position position="279"/>
    </location>
    <ligand>
        <name>NADPH</name>
        <dbReference type="ChEBI" id="CHEBI:57783"/>
    </ligand>
</feature>
<feature type="binding site" evidence="1">
    <location>
        <position position="281"/>
    </location>
    <ligand>
        <name>NADPH</name>
        <dbReference type="ChEBI" id="CHEBI:57783"/>
    </ligand>
</feature>
<evidence type="ECO:0000255" key="1">
    <source>
        <dbReference type="HAMAP-Rule" id="MF_00394"/>
    </source>
</evidence>
<reference key="1">
    <citation type="journal article" date="2009" name="J. Bacteriol.">
        <title>Genome sequence of Azotobacter vinelandii, an obligate aerobe specialized to support diverse anaerobic metabolic processes.</title>
        <authorList>
            <person name="Setubal J.C."/>
            <person name="Dos Santos P."/>
            <person name="Goldman B.S."/>
            <person name="Ertesvaag H."/>
            <person name="Espin G."/>
            <person name="Rubio L.M."/>
            <person name="Valla S."/>
            <person name="Almeida N.F."/>
            <person name="Balasubramanian D."/>
            <person name="Cromes L."/>
            <person name="Curatti L."/>
            <person name="Du Z."/>
            <person name="Godsy E."/>
            <person name="Goodner B."/>
            <person name="Hellner-Burris K."/>
            <person name="Hernandez J.A."/>
            <person name="Houmiel K."/>
            <person name="Imperial J."/>
            <person name="Kennedy C."/>
            <person name="Larson T.J."/>
            <person name="Latreille P."/>
            <person name="Ligon L.S."/>
            <person name="Lu J."/>
            <person name="Maerk M."/>
            <person name="Miller N.M."/>
            <person name="Norton S."/>
            <person name="O'Carroll I.P."/>
            <person name="Paulsen I."/>
            <person name="Raulfs E.C."/>
            <person name="Roemer R."/>
            <person name="Rosser J."/>
            <person name="Segura D."/>
            <person name="Slater S."/>
            <person name="Stricklin S.L."/>
            <person name="Studholme D.J."/>
            <person name="Sun J."/>
            <person name="Viana C.J."/>
            <person name="Wallin E."/>
            <person name="Wang B."/>
            <person name="Wheeler C."/>
            <person name="Zhu H."/>
            <person name="Dean D.R."/>
            <person name="Dixon R."/>
            <person name="Wood D."/>
        </authorList>
    </citation>
    <scope>NUCLEOTIDE SEQUENCE [LARGE SCALE GENOMIC DNA]</scope>
    <source>
        <strain>DJ / ATCC BAA-1303</strain>
    </source>
</reference>
<comment type="function">
    <text evidence="1">Catalyzes the reduction of the glycolytic intermediate dihydroxyacetone phosphate (DHAP) to sn-glycerol 3-phosphate (G3P), the key precursor for phospholipid synthesis.</text>
</comment>
<comment type="catalytic activity">
    <reaction evidence="1">
        <text>sn-glycerol 3-phosphate + NAD(+) = dihydroxyacetone phosphate + NADH + H(+)</text>
        <dbReference type="Rhea" id="RHEA:11092"/>
        <dbReference type="ChEBI" id="CHEBI:15378"/>
        <dbReference type="ChEBI" id="CHEBI:57540"/>
        <dbReference type="ChEBI" id="CHEBI:57597"/>
        <dbReference type="ChEBI" id="CHEBI:57642"/>
        <dbReference type="ChEBI" id="CHEBI:57945"/>
        <dbReference type="EC" id="1.1.1.94"/>
    </reaction>
    <physiologicalReaction direction="right-to-left" evidence="1">
        <dbReference type="Rhea" id="RHEA:11094"/>
    </physiologicalReaction>
</comment>
<comment type="catalytic activity">
    <reaction evidence="1">
        <text>sn-glycerol 3-phosphate + NADP(+) = dihydroxyacetone phosphate + NADPH + H(+)</text>
        <dbReference type="Rhea" id="RHEA:11096"/>
        <dbReference type="ChEBI" id="CHEBI:15378"/>
        <dbReference type="ChEBI" id="CHEBI:57597"/>
        <dbReference type="ChEBI" id="CHEBI:57642"/>
        <dbReference type="ChEBI" id="CHEBI:57783"/>
        <dbReference type="ChEBI" id="CHEBI:58349"/>
        <dbReference type="EC" id="1.1.1.94"/>
    </reaction>
    <physiologicalReaction direction="right-to-left" evidence="1">
        <dbReference type="Rhea" id="RHEA:11098"/>
    </physiologicalReaction>
</comment>
<comment type="pathway">
    <text evidence="1">Membrane lipid metabolism; glycerophospholipid metabolism.</text>
</comment>
<comment type="subcellular location">
    <subcellularLocation>
        <location evidence="1">Cytoplasm</location>
    </subcellularLocation>
</comment>
<comment type="similarity">
    <text evidence="1">Belongs to the NAD-dependent glycerol-3-phosphate dehydrogenase family.</text>
</comment>
<gene>
    <name evidence="1" type="primary">gpsA</name>
    <name type="ordered locus">Avin_29030</name>
</gene>
<protein>
    <recommendedName>
        <fullName evidence="1">Glycerol-3-phosphate dehydrogenase [NAD(P)+]</fullName>
        <ecNumber evidence="1">1.1.1.94</ecNumber>
    </recommendedName>
    <alternativeName>
        <fullName evidence="1">NAD(P)(+)-dependent glycerol-3-phosphate dehydrogenase</fullName>
    </alternativeName>
    <alternativeName>
        <fullName evidence="1">NAD(P)H-dependent dihydroxyacetone-phosphate reductase</fullName>
    </alternativeName>
</protein>
<dbReference type="EC" id="1.1.1.94" evidence="1"/>
<dbReference type="EMBL" id="CP001157">
    <property type="protein sequence ID" value="ACO79072.1"/>
    <property type="molecule type" value="Genomic_DNA"/>
</dbReference>
<dbReference type="RefSeq" id="WP_012701459.1">
    <property type="nucleotide sequence ID" value="NC_012560.1"/>
</dbReference>
<dbReference type="SMR" id="C1DLY5"/>
<dbReference type="STRING" id="322710.Avin_29030"/>
<dbReference type="EnsemblBacteria" id="ACO79072">
    <property type="protein sequence ID" value="ACO79072"/>
    <property type="gene ID" value="Avin_29030"/>
</dbReference>
<dbReference type="GeneID" id="88186010"/>
<dbReference type="KEGG" id="avn:Avin_29030"/>
<dbReference type="eggNOG" id="COG0240">
    <property type="taxonomic scope" value="Bacteria"/>
</dbReference>
<dbReference type="HOGENOM" id="CLU_033449_0_2_6"/>
<dbReference type="OrthoDB" id="9812273at2"/>
<dbReference type="UniPathway" id="UPA00940"/>
<dbReference type="Proteomes" id="UP000002424">
    <property type="component" value="Chromosome"/>
</dbReference>
<dbReference type="GO" id="GO:0005829">
    <property type="term" value="C:cytosol"/>
    <property type="evidence" value="ECO:0007669"/>
    <property type="project" value="TreeGrafter"/>
</dbReference>
<dbReference type="GO" id="GO:0047952">
    <property type="term" value="F:glycerol-3-phosphate dehydrogenase [NAD(P)+] activity"/>
    <property type="evidence" value="ECO:0007669"/>
    <property type="project" value="UniProtKB-UniRule"/>
</dbReference>
<dbReference type="GO" id="GO:0051287">
    <property type="term" value="F:NAD binding"/>
    <property type="evidence" value="ECO:0007669"/>
    <property type="project" value="InterPro"/>
</dbReference>
<dbReference type="GO" id="GO:0005975">
    <property type="term" value="P:carbohydrate metabolic process"/>
    <property type="evidence" value="ECO:0007669"/>
    <property type="project" value="InterPro"/>
</dbReference>
<dbReference type="GO" id="GO:0046167">
    <property type="term" value="P:glycerol-3-phosphate biosynthetic process"/>
    <property type="evidence" value="ECO:0007669"/>
    <property type="project" value="UniProtKB-UniRule"/>
</dbReference>
<dbReference type="GO" id="GO:0046168">
    <property type="term" value="P:glycerol-3-phosphate catabolic process"/>
    <property type="evidence" value="ECO:0007669"/>
    <property type="project" value="InterPro"/>
</dbReference>
<dbReference type="GO" id="GO:0046474">
    <property type="term" value="P:glycerophospholipid biosynthetic process"/>
    <property type="evidence" value="ECO:0007669"/>
    <property type="project" value="TreeGrafter"/>
</dbReference>
<dbReference type="FunFam" id="1.10.1040.10:FF:000001">
    <property type="entry name" value="Glycerol-3-phosphate dehydrogenase [NAD(P)+]"/>
    <property type="match status" value="1"/>
</dbReference>
<dbReference type="FunFam" id="3.40.50.720:FF:000019">
    <property type="entry name" value="Glycerol-3-phosphate dehydrogenase [NAD(P)+]"/>
    <property type="match status" value="1"/>
</dbReference>
<dbReference type="Gene3D" id="1.10.1040.10">
    <property type="entry name" value="N-(1-d-carboxylethyl)-l-norvaline Dehydrogenase, domain 2"/>
    <property type="match status" value="1"/>
</dbReference>
<dbReference type="Gene3D" id="3.40.50.720">
    <property type="entry name" value="NAD(P)-binding Rossmann-like Domain"/>
    <property type="match status" value="1"/>
</dbReference>
<dbReference type="HAMAP" id="MF_00394">
    <property type="entry name" value="NAD_Glyc3P_dehydrog"/>
    <property type="match status" value="1"/>
</dbReference>
<dbReference type="InterPro" id="IPR008927">
    <property type="entry name" value="6-PGluconate_DH-like_C_sf"/>
</dbReference>
<dbReference type="InterPro" id="IPR013328">
    <property type="entry name" value="6PGD_dom2"/>
</dbReference>
<dbReference type="InterPro" id="IPR006168">
    <property type="entry name" value="G3P_DH_NAD-dep"/>
</dbReference>
<dbReference type="InterPro" id="IPR006109">
    <property type="entry name" value="G3P_DH_NAD-dep_C"/>
</dbReference>
<dbReference type="InterPro" id="IPR011128">
    <property type="entry name" value="G3P_DH_NAD-dep_N"/>
</dbReference>
<dbReference type="InterPro" id="IPR036291">
    <property type="entry name" value="NAD(P)-bd_dom_sf"/>
</dbReference>
<dbReference type="NCBIfam" id="NF000940">
    <property type="entry name" value="PRK00094.1-2"/>
    <property type="match status" value="1"/>
</dbReference>
<dbReference type="NCBIfam" id="NF000942">
    <property type="entry name" value="PRK00094.1-4"/>
    <property type="match status" value="1"/>
</dbReference>
<dbReference type="NCBIfam" id="NF000946">
    <property type="entry name" value="PRK00094.2-4"/>
    <property type="match status" value="1"/>
</dbReference>
<dbReference type="PANTHER" id="PTHR11728">
    <property type="entry name" value="GLYCEROL-3-PHOSPHATE DEHYDROGENASE"/>
    <property type="match status" value="1"/>
</dbReference>
<dbReference type="PANTHER" id="PTHR11728:SF1">
    <property type="entry name" value="GLYCEROL-3-PHOSPHATE DEHYDROGENASE [NAD(+)] 2, CHLOROPLASTIC"/>
    <property type="match status" value="1"/>
</dbReference>
<dbReference type="Pfam" id="PF07479">
    <property type="entry name" value="NAD_Gly3P_dh_C"/>
    <property type="match status" value="1"/>
</dbReference>
<dbReference type="Pfam" id="PF01210">
    <property type="entry name" value="NAD_Gly3P_dh_N"/>
    <property type="match status" value="1"/>
</dbReference>
<dbReference type="PIRSF" id="PIRSF000114">
    <property type="entry name" value="Glycerol-3-P_dh"/>
    <property type="match status" value="1"/>
</dbReference>
<dbReference type="PRINTS" id="PR00077">
    <property type="entry name" value="GPDHDRGNASE"/>
</dbReference>
<dbReference type="SUPFAM" id="SSF48179">
    <property type="entry name" value="6-phosphogluconate dehydrogenase C-terminal domain-like"/>
    <property type="match status" value="1"/>
</dbReference>
<dbReference type="SUPFAM" id="SSF51735">
    <property type="entry name" value="NAD(P)-binding Rossmann-fold domains"/>
    <property type="match status" value="1"/>
</dbReference>
<dbReference type="PROSITE" id="PS00957">
    <property type="entry name" value="NAD_G3PDH"/>
    <property type="match status" value="1"/>
</dbReference>
<proteinExistence type="inferred from homology"/>
<organism>
    <name type="scientific">Azotobacter vinelandii (strain DJ / ATCC BAA-1303)</name>
    <dbReference type="NCBI Taxonomy" id="322710"/>
    <lineage>
        <taxon>Bacteria</taxon>
        <taxon>Pseudomonadati</taxon>
        <taxon>Pseudomonadota</taxon>
        <taxon>Gammaproteobacteria</taxon>
        <taxon>Pseudomonadales</taxon>
        <taxon>Pseudomonadaceae</taxon>
        <taxon>Azotobacter</taxon>
    </lineage>
</organism>
<keyword id="KW-0963">Cytoplasm</keyword>
<keyword id="KW-0444">Lipid biosynthesis</keyword>
<keyword id="KW-0443">Lipid metabolism</keyword>
<keyword id="KW-0520">NAD</keyword>
<keyword id="KW-0521">NADP</keyword>
<keyword id="KW-0547">Nucleotide-binding</keyword>
<keyword id="KW-0560">Oxidoreductase</keyword>
<keyword id="KW-0594">Phospholipid biosynthesis</keyword>
<keyword id="KW-1208">Phospholipid metabolism</keyword>
<name>GPDA_AZOVD</name>